<geneLocation type="plasmid">
    <name>pHV3</name>
</geneLocation>
<evidence type="ECO:0000255" key="1">
    <source>
        <dbReference type="PROSITE-ProRule" id="PRU00648"/>
    </source>
</evidence>
<evidence type="ECO:0000305" key="2"/>
<reference key="1">
    <citation type="journal article" date="2010" name="PLoS ONE">
        <title>The complete genome sequence of Haloferax volcanii DS2, a model archaeon.</title>
        <authorList>
            <person name="Hartman A.L."/>
            <person name="Norais C."/>
            <person name="Badger J.H."/>
            <person name="Delmas S."/>
            <person name="Haldenby S."/>
            <person name="Madupu R."/>
            <person name="Robinson J."/>
            <person name="Khouri H."/>
            <person name="Ren Q."/>
            <person name="Lowe T.M."/>
            <person name="Maupin-Furlow J."/>
            <person name="Pohlschroder M."/>
            <person name="Daniels C."/>
            <person name="Pfeiffer F."/>
            <person name="Allers T."/>
            <person name="Eisen J.A."/>
        </authorList>
    </citation>
    <scope>NUCLEOTIDE SEQUENCE [LARGE SCALE GENOMIC DNA]</scope>
    <source>
        <strain>ATCC 29605 / DSM 3757 / JCM 8879 / NBRC 14742 / NCIMB 2012 / VKM B-1768 / DS2</strain>
    </source>
</reference>
<accession>D4GQ16</accession>
<feature type="signal peptide" description="Tat-type signal" evidence="1">
    <location>
        <begin position="1"/>
        <end position="40"/>
    </location>
</feature>
<feature type="chain" id="PRO_0000421002" description="Putative ABC transporter molybdenum-binding protein HVO_B0369">
    <location>
        <begin position="41"/>
        <end position="305"/>
    </location>
</feature>
<dbReference type="EMBL" id="CP001953">
    <property type="protein sequence ID" value="ADE01295.1"/>
    <property type="molecule type" value="Genomic_DNA"/>
</dbReference>
<dbReference type="RefSeq" id="WP_004041165.1">
    <property type="nucleotide sequence ID" value="NC_013964.1"/>
</dbReference>
<dbReference type="SMR" id="D4GQ16"/>
<dbReference type="PaxDb" id="309800-C498_01810"/>
<dbReference type="EnsemblBacteria" id="ADE01295">
    <property type="protein sequence ID" value="ADE01295"/>
    <property type="gene ID" value="HVO_B0369"/>
</dbReference>
<dbReference type="GeneID" id="8919251"/>
<dbReference type="KEGG" id="hvo:HVO_B0369"/>
<dbReference type="eggNOG" id="arCOG00219">
    <property type="taxonomic scope" value="Archaea"/>
</dbReference>
<dbReference type="HOGENOM" id="CLU_055936_2_0_2"/>
<dbReference type="OrthoDB" id="7820at2157"/>
<dbReference type="Proteomes" id="UP000008243">
    <property type="component" value="Plasmid pHV3"/>
</dbReference>
<dbReference type="GO" id="GO:0030973">
    <property type="term" value="F:molybdate ion binding"/>
    <property type="evidence" value="ECO:0007669"/>
    <property type="project" value="TreeGrafter"/>
</dbReference>
<dbReference type="GO" id="GO:0015689">
    <property type="term" value="P:molybdate ion transport"/>
    <property type="evidence" value="ECO:0007669"/>
    <property type="project" value="TreeGrafter"/>
</dbReference>
<dbReference type="CDD" id="cd13540">
    <property type="entry name" value="PBP2_ModA_WtpA"/>
    <property type="match status" value="1"/>
</dbReference>
<dbReference type="Gene3D" id="3.40.190.10">
    <property type="entry name" value="Periplasmic binding protein-like II"/>
    <property type="match status" value="2"/>
</dbReference>
<dbReference type="InterPro" id="IPR050682">
    <property type="entry name" value="ModA/WtpA"/>
</dbReference>
<dbReference type="InterPro" id="IPR006311">
    <property type="entry name" value="TAT_signal"/>
</dbReference>
<dbReference type="PANTHER" id="PTHR30632">
    <property type="entry name" value="MOLYBDATE-BINDING PERIPLASMIC PROTEIN"/>
    <property type="match status" value="1"/>
</dbReference>
<dbReference type="PANTHER" id="PTHR30632:SF16">
    <property type="entry name" value="MOLYBDATE_TUNGSTATE-BINDING PROTEIN WTPA"/>
    <property type="match status" value="1"/>
</dbReference>
<dbReference type="Pfam" id="PF13531">
    <property type="entry name" value="SBP_bac_11"/>
    <property type="match status" value="1"/>
</dbReference>
<dbReference type="SUPFAM" id="SSF53850">
    <property type="entry name" value="Periplasmic binding protein-like II"/>
    <property type="match status" value="1"/>
</dbReference>
<dbReference type="PROSITE" id="PS51318">
    <property type="entry name" value="TAT"/>
    <property type="match status" value="1"/>
</dbReference>
<proteinExistence type="inferred from homology"/>
<name>MOBDB_HALVD</name>
<protein>
    <recommendedName>
        <fullName>Putative ABC transporter molybdenum-binding protein HVO_B0369</fullName>
    </recommendedName>
</protein>
<gene>
    <name type="ordered locus">HVO_B0369</name>
</gene>
<organism>
    <name type="scientific">Haloferax volcanii (strain ATCC 29605 / DSM 3757 / JCM 8879 / NBRC 14742 / NCIMB 2012 / VKM B-1768 / DS2)</name>
    <name type="common">Halobacterium volcanii</name>
    <dbReference type="NCBI Taxonomy" id="309800"/>
    <lineage>
        <taxon>Archaea</taxon>
        <taxon>Methanobacteriati</taxon>
        <taxon>Methanobacteriota</taxon>
        <taxon>Stenosarchaea group</taxon>
        <taxon>Halobacteria</taxon>
        <taxon>Halobacteriales</taxon>
        <taxon>Haloferacaceae</taxon>
        <taxon>Haloferax</taxon>
    </lineage>
</organism>
<comment type="function">
    <text evidence="2">Part of an ABC transporter complex involved in molybdenum import.</text>
</comment>
<comment type="subunit">
    <text evidence="2">The complex is composed of two ATP-binding proteins, two transmembrane proteins (HVO_B0370) and a solute-binding protein (HVO_B0369).</text>
</comment>
<comment type="PTM">
    <text>Predicted to be exported by the Tat system. The position of the signal peptide cleavage has not been experimentally proven.</text>
</comment>
<comment type="similarity">
    <text evidence="2">Belongs to the bacterial solute-binding protein 1 family. WtpA subfamily.</text>
</comment>
<sequence>MNPDSAAGRSSRRAFLAAVGGVAAGGLTATAGCLGRGEEAPTVSILAAGSLQRALTTEFDAPDGTRIEVEAHGSARVARMVDDDQRDPDIVALADPALFDAPLSVPWYATFANNALVVAYNPQTEGGTRVTEAASWPDALLDDAVSLGRTDPDLDPLGYRTRFALALAADHYDRPALTADLLRRDQIYPETQLLAQFDAGGVDAAFVYRSMAVERDYPYLELPAAINLSDPDHASAYATVSYTLPDGVTVRGGPIRYAATRRTDTAAAKSVFEALVGTAGDFLEPSGFTVRASHPHYFGDVPPTA</sequence>
<keyword id="KW-0614">Plasmid</keyword>
<keyword id="KW-1185">Reference proteome</keyword>
<keyword id="KW-0732">Signal</keyword>